<sequence length="350" mass="39021">MEVRHDWTVAEVQALFEKPFMDLVFEAQQVHRQYHEPNKVQVSTLLSIKTGACPEDCKYCPQSAHYRTDVERERLLEVEKVLDAAQKAKVSGATRFCMGAAWKNPKERDMPYLMDMIRGVKDIGLETCMTLGMITGGQADELAGAGLDYYNHNLDTSPEYYGQVITTRTYQDRLDTLSHVRDAGMKICSGGIIGMGESSRDRAGLLVELATLPTHPESVPINMLVKVKGTPMEDVEDVDPFDFIRIIAVARIIMPMSSVRLSAGREDMNEQMQTLCFMAGANSVFYGCKLLTTPNPGEDKDMQLFAKLGINSQEQAAKPDEVQEHELLGQVAQRVAARPGKDDLFYDATV</sequence>
<proteinExistence type="inferred from homology"/>
<comment type="function">
    <text evidence="1">Catalyzes the conversion of dethiobiotin (DTB) to biotin by the insertion of a sulfur atom into dethiobiotin via a radical-based mechanism.</text>
</comment>
<comment type="catalytic activity">
    <reaction evidence="1">
        <text>(4R,5S)-dethiobiotin + (sulfur carrier)-SH + 2 reduced [2Fe-2S]-[ferredoxin] + 2 S-adenosyl-L-methionine = (sulfur carrier)-H + biotin + 2 5'-deoxyadenosine + 2 L-methionine + 2 oxidized [2Fe-2S]-[ferredoxin]</text>
        <dbReference type="Rhea" id="RHEA:22060"/>
        <dbReference type="Rhea" id="RHEA-COMP:10000"/>
        <dbReference type="Rhea" id="RHEA-COMP:10001"/>
        <dbReference type="Rhea" id="RHEA-COMP:14737"/>
        <dbReference type="Rhea" id="RHEA-COMP:14739"/>
        <dbReference type="ChEBI" id="CHEBI:17319"/>
        <dbReference type="ChEBI" id="CHEBI:29917"/>
        <dbReference type="ChEBI" id="CHEBI:33737"/>
        <dbReference type="ChEBI" id="CHEBI:33738"/>
        <dbReference type="ChEBI" id="CHEBI:57586"/>
        <dbReference type="ChEBI" id="CHEBI:57844"/>
        <dbReference type="ChEBI" id="CHEBI:59789"/>
        <dbReference type="ChEBI" id="CHEBI:64428"/>
        <dbReference type="ChEBI" id="CHEBI:149473"/>
        <dbReference type="EC" id="2.8.1.6"/>
    </reaction>
</comment>
<comment type="cofactor">
    <cofactor evidence="1">
        <name>[4Fe-4S] cluster</name>
        <dbReference type="ChEBI" id="CHEBI:49883"/>
    </cofactor>
    <text evidence="1">Binds 1 [4Fe-4S] cluster. The cluster is coordinated with 3 cysteines and an exchangeable S-adenosyl-L-methionine.</text>
</comment>
<comment type="cofactor">
    <cofactor evidence="1">
        <name>[2Fe-2S] cluster</name>
        <dbReference type="ChEBI" id="CHEBI:190135"/>
    </cofactor>
    <text evidence="1">Binds 1 [2Fe-2S] cluster. The cluster is coordinated with 3 cysteines and 1 arginine.</text>
</comment>
<comment type="pathway">
    <text evidence="1">Cofactor biosynthesis; biotin biosynthesis; biotin from 7,8-diaminononanoate: step 2/2.</text>
</comment>
<comment type="subunit">
    <text evidence="1">Homodimer.</text>
</comment>
<comment type="similarity">
    <text evidence="1">Belongs to the radical SAM superfamily. Biotin synthase family.</text>
</comment>
<gene>
    <name evidence="1" type="primary">bioB</name>
    <name type="ordered locus">PBPRA2329</name>
</gene>
<dbReference type="EC" id="2.8.1.6" evidence="1"/>
<dbReference type="EMBL" id="CR378670">
    <property type="protein sequence ID" value="CAG20714.1"/>
    <property type="molecule type" value="Genomic_DNA"/>
</dbReference>
<dbReference type="RefSeq" id="WP_011219002.1">
    <property type="nucleotide sequence ID" value="NC_006370.1"/>
</dbReference>
<dbReference type="SMR" id="Q6LPR2"/>
<dbReference type="STRING" id="298386.PBPRA2329"/>
<dbReference type="KEGG" id="ppr:PBPRA2329"/>
<dbReference type="eggNOG" id="COG0502">
    <property type="taxonomic scope" value="Bacteria"/>
</dbReference>
<dbReference type="HOGENOM" id="CLU_033172_1_2_6"/>
<dbReference type="UniPathway" id="UPA00078">
    <property type="reaction ID" value="UER00162"/>
</dbReference>
<dbReference type="Proteomes" id="UP000000593">
    <property type="component" value="Chromosome 1"/>
</dbReference>
<dbReference type="GO" id="GO:0051537">
    <property type="term" value="F:2 iron, 2 sulfur cluster binding"/>
    <property type="evidence" value="ECO:0007669"/>
    <property type="project" value="UniProtKB-KW"/>
</dbReference>
<dbReference type="GO" id="GO:0051539">
    <property type="term" value="F:4 iron, 4 sulfur cluster binding"/>
    <property type="evidence" value="ECO:0007669"/>
    <property type="project" value="UniProtKB-KW"/>
</dbReference>
<dbReference type="GO" id="GO:0004076">
    <property type="term" value="F:biotin synthase activity"/>
    <property type="evidence" value="ECO:0007669"/>
    <property type="project" value="UniProtKB-UniRule"/>
</dbReference>
<dbReference type="GO" id="GO:0005506">
    <property type="term" value="F:iron ion binding"/>
    <property type="evidence" value="ECO:0007669"/>
    <property type="project" value="UniProtKB-UniRule"/>
</dbReference>
<dbReference type="GO" id="GO:0009102">
    <property type="term" value="P:biotin biosynthetic process"/>
    <property type="evidence" value="ECO:0007669"/>
    <property type="project" value="UniProtKB-UniRule"/>
</dbReference>
<dbReference type="CDD" id="cd01335">
    <property type="entry name" value="Radical_SAM"/>
    <property type="match status" value="1"/>
</dbReference>
<dbReference type="FunFam" id="3.20.20.70:FF:000011">
    <property type="entry name" value="Biotin synthase"/>
    <property type="match status" value="1"/>
</dbReference>
<dbReference type="Gene3D" id="3.20.20.70">
    <property type="entry name" value="Aldolase class I"/>
    <property type="match status" value="1"/>
</dbReference>
<dbReference type="HAMAP" id="MF_01694">
    <property type="entry name" value="BioB"/>
    <property type="match status" value="1"/>
</dbReference>
<dbReference type="InterPro" id="IPR013785">
    <property type="entry name" value="Aldolase_TIM"/>
</dbReference>
<dbReference type="InterPro" id="IPR010722">
    <property type="entry name" value="BATS_dom"/>
</dbReference>
<dbReference type="InterPro" id="IPR002684">
    <property type="entry name" value="Biotin_synth/BioAB"/>
</dbReference>
<dbReference type="InterPro" id="IPR024177">
    <property type="entry name" value="Biotin_synthase"/>
</dbReference>
<dbReference type="InterPro" id="IPR006638">
    <property type="entry name" value="Elp3/MiaA/NifB-like_rSAM"/>
</dbReference>
<dbReference type="InterPro" id="IPR007197">
    <property type="entry name" value="rSAM"/>
</dbReference>
<dbReference type="NCBIfam" id="TIGR00433">
    <property type="entry name" value="bioB"/>
    <property type="match status" value="1"/>
</dbReference>
<dbReference type="PANTHER" id="PTHR22976">
    <property type="entry name" value="BIOTIN SYNTHASE"/>
    <property type="match status" value="1"/>
</dbReference>
<dbReference type="PANTHER" id="PTHR22976:SF2">
    <property type="entry name" value="BIOTIN SYNTHASE, MITOCHONDRIAL"/>
    <property type="match status" value="1"/>
</dbReference>
<dbReference type="Pfam" id="PF06968">
    <property type="entry name" value="BATS"/>
    <property type="match status" value="1"/>
</dbReference>
<dbReference type="Pfam" id="PF04055">
    <property type="entry name" value="Radical_SAM"/>
    <property type="match status" value="1"/>
</dbReference>
<dbReference type="PIRSF" id="PIRSF001619">
    <property type="entry name" value="Biotin_synth"/>
    <property type="match status" value="1"/>
</dbReference>
<dbReference type="SFLD" id="SFLDG01060">
    <property type="entry name" value="BATS_domain_containing"/>
    <property type="match status" value="1"/>
</dbReference>
<dbReference type="SFLD" id="SFLDF00272">
    <property type="entry name" value="biotin_synthase"/>
    <property type="match status" value="1"/>
</dbReference>
<dbReference type="SMART" id="SM00876">
    <property type="entry name" value="BATS"/>
    <property type="match status" value="1"/>
</dbReference>
<dbReference type="SMART" id="SM00729">
    <property type="entry name" value="Elp3"/>
    <property type="match status" value="1"/>
</dbReference>
<dbReference type="SUPFAM" id="SSF102114">
    <property type="entry name" value="Radical SAM enzymes"/>
    <property type="match status" value="1"/>
</dbReference>
<dbReference type="PROSITE" id="PS51918">
    <property type="entry name" value="RADICAL_SAM"/>
    <property type="match status" value="1"/>
</dbReference>
<feature type="chain" id="PRO_0000381527" description="Biotin synthase">
    <location>
        <begin position="1"/>
        <end position="350"/>
    </location>
</feature>
<feature type="domain" description="Radical SAM core" evidence="2">
    <location>
        <begin position="38"/>
        <end position="257"/>
    </location>
</feature>
<feature type="binding site" evidence="1">
    <location>
        <position position="53"/>
    </location>
    <ligand>
        <name>[4Fe-4S] cluster</name>
        <dbReference type="ChEBI" id="CHEBI:49883"/>
        <note>4Fe-4S-S-AdoMet</note>
    </ligand>
</feature>
<feature type="binding site" evidence="1">
    <location>
        <position position="57"/>
    </location>
    <ligand>
        <name>[4Fe-4S] cluster</name>
        <dbReference type="ChEBI" id="CHEBI:49883"/>
        <note>4Fe-4S-S-AdoMet</note>
    </ligand>
</feature>
<feature type="binding site" evidence="1">
    <location>
        <position position="60"/>
    </location>
    <ligand>
        <name>[4Fe-4S] cluster</name>
        <dbReference type="ChEBI" id="CHEBI:49883"/>
        <note>4Fe-4S-S-AdoMet</note>
    </ligand>
</feature>
<feature type="binding site" evidence="1">
    <location>
        <position position="97"/>
    </location>
    <ligand>
        <name>[2Fe-2S] cluster</name>
        <dbReference type="ChEBI" id="CHEBI:190135"/>
    </ligand>
</feature>
<feature type="binding site" evidence="1">
    <location>
        <position position="128"/>
    </location>
    <ligand>
        <name>[2Fe-2S] cluster</name>
        <dbReference type="ChEBI" id="CHEBI:190135"/>
    </ligand>
</feature>
<feature type="binding site" evidence="1">
    <location>
        <position position="188"/>
    </location>
    <ligand>
        <name>[2Fe-2S] cluster</name>
        <dbReference type="ChEBI" id="CHEBI:190135"/>
    </ligand>
</feature>
<feature type="binding site" evidence="1">
    <location>
        <position position="260"/>
    </location>
    <ligand>
        <name>[2Fe-2S] cluster</name>
        <dbReference type="ChEBI" id="CHEBI:190135"/>
    </ligand>
</feature>
<reference key="1">
    <citation type="journal article" date="2005" name="Science">
        <title>Life at depth: Photobacterium profundum genome sequence and expression analysis.</title>
        <authorList>
            <person name="Vezzi A."/>
            <person name="Campanaro S."/>
            <person name="D'Angelo M."/>
            <person name="Simonato F."/>
            <person name="Vitulo N."/>
            <person name="Lauro F.M."/>
            <person name="Cestaro A."/>
            <person name="Malacrida G."/>
            <person name="Simionati B."/>
            <person name="Cannata N."/>
            <person name="Romualdi C."/>
            <person name="Bartlett D.H."/>
            <person name="Valle G."/>
        </authorList>
    </citation>
    <scope>NUCLEOTIDE SEQUENCE [LARGE SCALE GENOMIC DNA]</scope>
    <source>
        <strain>ATCC BAA-1253 / SS9</strain>
    </source>
</reference>
<evidence type="ECO:0000255" key="1">
    <source>
        <dbReference type="HAMAP-Rule" id="MF_01694"/>
    </source>
</evidence>
<evidence type="ECO:0000255" key="2">
    <source>
        <dbReference type="PROSITE-ProRule" id="PRU01266"/>
    </source>
</evidence>
<protein>
    <recommendedName>
        <fullName evidence="1">Biotin synthase</fullName>
        <ecNumber evidence="1">2.8.1.6</ecNumber>
    </recommendedName>
</protein>
<keyword id="KW-0001">2Fe-2S</keyword>
<keyword id="KW-0004">4Fe-4S</keyword>
<keyword id="KW-0093">Biotin biosynthesis</keyword>
<keyword id="KW-0408">Iron</keyword>
<keyword id="KW-0411">Iron-sulfur</keyword>
<keyword id="KW-0479">Metal-binding</keyword>
<keyword id="KW-1185">Reference proteome</keyword>
<keyword id="KW-0949">S-adenosyl-L-methionine</keyword>
<keyword id="KW-0808">Transferase</keyword>
<name>BIOB_PHOPR</name>
<organism>
    <name type="scientific">Photobacterium profundum (strain SS9)</name>
    <dbReference type="NCBI Taxonomy" id="298386"/>
    <lineage>
        <taxon>Bacteria</taxon>
        <taxon>Pseudomonadati</taxon>
        <taxon>Pseudomonadota</taxon>
        <taxon>Gammaproteobacteria</taxon>
        <taxon>Vibrionales</taxon>
        <taxon>Vibrionaceae</taxon>
        <taxon>Photobacterium</taxon>
    </lineage>
</organism>
<accession>Q6LPR2</accession>